<proteinExistence type="inferred from homology"/>
<sequence>MYDSIMSVSARNALSRLSETVAEKGVGSASAPQAVPAAPGASFGEVLSQMTGSVSQKLQAAEATSIQGIKGDAPVRDVVSSVMEAEQSLQTAIAIRDKIVQAYLEISRMPI</sequence>
<dbReference type="EMBL" id="CP001489">
    <property type="protein sequence ID" value="ACO02029.1"/>
    <property type="molecule type" value="Genomic_DNA"/>
</dbReference>
<dbReference type="RefSeq" id="WP_002966429.1">
    <property type="nucleotide sequence ID" value="NC_012442.1"/>
</dbReference>
<dbReference type="SMR" id="C0RK96"/>
<dbReference type="KEGG" id="bmi:BMEA_B0154"/>
<dbReference type="HOGENOM" id="CLU_147249_2_0_5"/>
<dbReference type="Proteomes" id="UP000001748">
    <property type="component" value="Chromosome II"/>
</dbReference>
<dbReference type="GO" id="GO:0009425">
    <property type="term" value="C:bacterial-type flagellum basal body"/>
    <property type="evidence" value="ECO:0007669"/>
    <property type="project" value="UniProtKB-SubCell"/>
</dbReference>
<dbReference type="GO" id="GO:0003774">
    <property type="term" value="F:cytoskeletal motor activity"/>
    <property type="evidence" value="ECO:0007669"/>
    <property type="project" value="InterPro"/>
</dbReference>
<dbReference type="GO" id="GO:0005198">
    <property type="term" value="F:structural molecule activity"/>
    <property type="evidence" value="ECO:0007669"/>
    <property type="project" value="InterPro"/>
</dbReference>
<dbReference type="GO" id="GO:0071973">
    <property type="term" value="P:bacterial-type flagellum-dependent cell motility"/>
    <property type="evidence" value="ECO:0007669"/>
    <property type="project" value="InterPro"/>
</dbReference>
<dbReference type="HAMAP" id="MF_00724">
    <property type="entry name" value="FliE"/>
    <property type="match status" value="1"/>
</dbReference>
<dbReference type="InterPro" id="IPR001624">
    <property type="entry name" value="FliE"/>
</dbReference>
<dbReference type="PANTHER" id="PTHR34653">
    <property type="match status" value="1"/>
</dbReference>
<dbReference type="PANTHER" id="PTHR34653:SF1">
    <property type="entry name" value="FLAGELLAR HOOK-BASAL BODY COMPLEX PROTEIN FLIE"/>
    <property type="match status" value="1"/>
</dbReference>
<dbReference type="Pfam" id="PF02049">
    <property type="entry name" value="FliE"/>
    <property type="match status" value="1"/>
</dbReference>
<dbReference type="PRINTS" id="PR01006">
    <property type="entry name" value="FLGHOOKFLIE"/>
</dbReference>
<comment type="subcellular location">
    <subcellularLocation>
        <location evidence="1">Bacterial flagellum basal body</location>
    </subcellularLocation>
</comment>
<comment type="similarity">
    <text evidence="1">Belongs to the FliE family.</text>
</comment>
<accession>C0RK96</accession>
<reference key="1">
    <citation type="submission" date="2009-03" db="EMBL/GenBank/DDBJ databases">
        <title>Brucella melitensis ATCC 23457 whole genome shotgun sequencing project.</title>
        <authorList>
            <person name="Setubal J.C."/>
            <person name="Boyle S."/>
            <person name="Crasta O.R."/>
            <person name="Gillespie J.J."/>
            <person name="Kenyon R.W."/>
            <person name="Lu J."/>
            <person name="Mane S."/>
            <person name="Nagrani S."/>
            <person name="Shallom J.M."/>
            <person name="Shallom S."/>
            <person name="Shukla M."/>
            <person name="Snyder E.E."/>
            <person name="Sobral B.W."/>
            <person name="Wattam A.R."/>
            <person name="Will R."/>
            <person name="Williams K."/>
            <person name="Yoo H."/>
            <person name="Munk C."/>
            <person name="Tapia R."/>
            <person name="Han C."/>
            <person name="Detter J.C."/>
            <person name="Bruce D."/>
            <person name="Brettin T.S."/>
        </authorList>
    </citation>
    <scope>NUCLEOTIDE SEQUENCE [LARGE SCALE GENOMIC DNA]</scope>
    <source>
        <strain>ATCC 23457</strain>
    </source>
</reference>
<keyword id="KW-0975">Bacterial flagellum</keyword>
<gene>
    <name evidence="1" type="primary">fliE</name>
    <name type="ordered locus">BMEA_B0154</name>
</gene>
<organism>
    <name type="scientific">Brucella melitensis biotype 2 (strain ATCC 23457)</name>
    <dbReference type="NCBI Taxonomy" id="546272"/>
    <lineage>
        <taxon>Bacteria</taxon>
        <taxon>Pseudomonadati</taxon>
        <taxon>Pseudomonadota</taxon>
        <taxon>Alphaproteobacteria</taxon>
        <taxon>Hyphomicrobiales</taxon>
        <taxon>Brucellaceae</taxon>
        <taxon>Brucella/Ochrobactrum group</taxon>
        <taxon>Brucella</taxon>
    </lineage>
</organism>
<name>FLIE_BRUMB</name>
<feature type="chain" id="PRO_1000148046" description="Flagellar hook-basal body complex protein FliE">
    <location>
        <begin position="1"/>
        <end position="111"/>
    </location>
</feature>
<protein>
    <recommendedName>
        <fullName evidence="1">Flagellar hook-basal body complex protein FliE</fullName>
    </recommendedName>
</protein>
<evidence type="ECO:0000255" key="1">
    <source>
        <dbReference type="HAMAP-Rule" id="MF_00724"/>
    </source>
</evidence>